<dbReference type="EMBL" id="M94771">
    <property type="protein sequence ID" value="AAA73355.1"/>
    <property type="molecule type" value="mRNA"/>
</dbReference>
<dbReference type="PANTHER" id="PTHR10068">
    <property type="entry name" value="BONE MARROW PROTEOGLYCAN"/>
    <property type="match status" value="1"/>
</dbReference>
<dbReference type="PANTHER" id="PTHR10068:SF14">
    <property type="entry name" value="CELL WALL ADHESIN EAP1"/>
    <property type="match status" value="1"/>
</dbReference>
<feature type="chain" id="PRO_0000058015" description="Ovarian abundant message protein">
    <location>
        <begin position="1"/>
        <end position="590"/>
    </location>
</feature>
<feature type="repeat" description="1-1">
    <location>
        <begin position="66"/>
        <end position="71"/>
    </location>
</feature>
<feature type="repeat" description="1-2">
    <location>
        <begin position="72"/>
        <end position="77"/>
    </location>
</feature>
<feature type="repeat" description="1-3">
    <location>
        <begin position="78"/>
        <end position="83"/>
    </location>
</feature>
<feature type="repeat" description="1-4">
    <location>
        <begin position="84"/>
        <end position="89"/>
    </location>
</feature>
<feature type="repeat" description="1-5">
    <location>
        <begin position="90"/>
        <end position="95"/>
    </location>
</feature>
<feature type="repeat" description="1-6">
    <location>
        <begin position="96"/>
        <end position="101"/>
    </location>
</feature>
<feature type="repeat" description="1-7">
    <location>
        <begin position="102"/>
        <end position="107"/>
    </location>
</feature>
<feature type="repeat" description="1-8">
    <location>
        <begin position="108"/>
        <end position="113"/>
    </location>
</feature>
<feature type="repeat" description="1-9">
    <location>
        <begin position="114"/>
        <end position="119"/>
    </location>
</feature>
<feature type="repeat" description="1-10">
    <location>
        <begin position="120"/>
        <end position="125"/>
    </location>
</feature>
<feature type="repeat" description="1-11">
    <location>
        <begin position="126"/>
        <end position="131"/>
    </location>
</feature>
<feature type="repeat" description="1-12">
    <location>
        <begin position="132"/>
        <end position="137"/>
    </location>
</feature>
<feature type="repeat" description="1-13">
    <location>
        <begin position="138"/>
        <end position="143"/>
    </location>
</feature>
<feature type="repeat" description="1-14">
    <location>
        <begin position="144"/>
        <end position="149"/>
    </location>
</feature>
<feature type="repeat" description="1-15">
    <location>
        <begin position="150"/>
        <end position="155"/>
    </location>
</feature>
<feature type="repeat" description="1-16">
    <location>
        <begin position="156"/>
        <end position="161"/>
    </location>
</feature>
<feature type="repeat" description="1-17">
    <location>
        <begin position="162"/>
        <end position="167"/>
    </location>
</feature>
<feature type="repeat" description="1-18">
    <location>
        <begin position="168"/>
        <end position="173"/>
    </location>
</feature>
<feature type="repeat" description="1-19">
    <location>
        <begin position="174"/>
        <end position="179"/>
    </location>
</feature>
<feature type="repeat" description="1-20">
    <location>
        <begin position="180"/>
        <end position="185"/>
    </location>
</feature>
<feature type="repeat" description="2-1">
    <location>
        <begin position="300"/>
        <end position="305"/>
    </location>
</feature>
<feature type="repeat" description="2-2">
    <location>
        <begin position="306"/>
        <end position="311"/>
    </location>
</feature>
<feature type="repeat" description="2-3">
    <location>
        <begin position="312"/>
        <end position="317"/>
    </location>
</feature>
<feature type="repeat" description="2-4">
    <location>
        <begin position="318"/>
        <end position="323"/>
    </location>
</feature>
<feature type="repeat" description="2-5">
    <location>
        <begin position="324"/>
        <end position="329"/>
    </location>
</feature>
<feature type="repeat" description="2-6">
    <location>
        <begin position="330"/>
        <end position="335"/>
    </location>
</feature>
<feature type="repeat" description="2-7">
    <location>
        <begin position="336"/>
        <end position="341"/>
    </location>
</feature>
<feature type="repeat" description="2-8; approximate">
    <location>
        <begin position="342"/>
        <end position="347"/>
    </location>
</feature>
<feature type="repeat" description="3-1">
    <location>
        <begin position="348"/>
        <end position="353"/>
    </location>
</feature>
<feature type="repeat" description="3-2">
    <location>
        <begin position="354"/>
        <end position="359"/>
    </location>
</feature>
<feature type="repeat" description="3-3">
    <location>
        <begin position="360"/>
        <end position="365"/>
    </location>
</feature>
<feature type="repeat" description="3-4">
    <location>
        <begin position="366"/>
        <end position="371"/>
    </location>
</feature>
<feature type="repeat" description="3-5">
    <location>
        <begin position="372"/>
        <end position="377"/>
    </location>
</feature>
<feature type="repeat" description="3-6">
    <location>
        <begin position="378"/>
        <end position="383"/>
    </location>
</feature>
<feature type="repeat" description="3-7">
    <location>
        <begin position="384"/>
        <end position="389"/>
    </location>
</feature>
<feature type="repeat" description="3-8">
    <location>
        <begin position="390"/>
        <end position="395"/>
    </location>
</feature>
<feature type="repeat" description="3-9">
    <location>
        <begin position="396"/>
        <end position="401"/>
    </location>
</feature>
<feature type="repeat" description="3-10">
    <location>
        <begin position="402"/>
        <end position="407"/>
    </location>
</feature>
<feature type="repeat" description="3-11">
    <location>
        <begin position="408"/>
        <end position="413"/>
    </location>
</feature>
<feature type="repeat" description="4-1">
    <location>
        <begin position="419"/>
        <end position="424"/>
    </location>
</feature>
<feature type="repeat" description="4-2">
    <location>
        <begin position="425"/>
        <end position="430"/>
    </location>
</feature>
<feature type="repeat" description="4-3">
    <location>
        <begin position="431"/>
        <end position="436"/>
    </location>
</feature>
<feature type="repeat" description="4-4">
    <location>
        <begin position="437"/>
        <end position="442"/>
    </location>
</feature>
<feature type="repeat" description="4-5">
    <location>
        <begin position="443"/>
        <end position="448"/>
    </location>
</feature>
<feature type="repeat" description="4-6; approximate">
    <location>
        <begin position="449"/>
        <end position="454"/>
    </location>
</feature>
<feature type="region of interest" description="Disordered" evidence="1">
    <location>
        <begin position="1"/>
        <end position="71"/>
    </location>
</feature>
<feature type="region of interest" description="20 X 6 AA tandem repeats of P-[LP]-V-[EG]-[EG]-[QR]">
    <location>
        <begin position="66"/>
        <end position="185"/>
    </location>
</feature>
<feature type="region of interest" description="8 X 6 AA approximate tandem repeats of P-L-A-[GV]-[AV]-[PL]">
    <location>
        <begin position="300"/>
        <end position="347"/>
    </location>
</feature>
<feature type="region of interest" description="11 X 6 AA tandem repeats of approximate R-R-A-[GD]-V-[LV]">
    <location>
        <begin position="348"/>
        <end position="413"/>
    </location>
</feature>
<feature type="region of interest" description="6 X 6 AA approximate tandem repeats of Q-[QR]-L-A-D-V">
    <location>
        <begin position="419"/>
        <end position="454"/>
    </location>
</feature>
<feature type="compositionally biased region" description="Basic residues" evidence="1">
    <location>
        <begin position="18"/>
        <end position="29"/>
    </location>
</feature>
<proteinExistence type="evidence at transcript level"/>
<reference key="1">
    <citation type="journal article" date="1992" name="Mol. Biochem. Parasitol.">
        <title>An extremely abundant ovarian mRNA from the parasitic nematode Ascaris lumbricoides var. suum has multiple repeat motifs.</title>
        <authorList>
            <person name="Gruidl M."/>
            <person name="Cater J."/>
            <person name="Wilson B."/>
            <person name="Gharib S."/>
            <person name="Bennett K.L."/>
        </authorList>
    </citation>
    <scope>NUCLEOTIDE SEQUENCE [MRNA]</scope>
    <source>
        <tissue>Ovary</tissue>
    </source>
</reference>
<evidence type="ECO:0000256" key="1">
    <source>
        <dbReference type="SAM" id="MobiDB-lite"/>
    </source>
</evidence>
<organism>
    <name type="scientific">Ascaris suum</name>
    <name type="common">Pig roundworm</name>
    <name type="synonym">Ascaris lumbricoides</name>
    <dbReference type="NCBI Taxonomy" id="6253"/>
    <lineage>
        <taxon>Eukaryota</taxon>
        <taxon>Metazoa</taxon>
        <taxon>Ecdysozoa</taxon>
        <taxon>Nematoda</taxon>
        <taxon>Chromadorea</taxon>
        <taxon>Rhabditida</taxon>
        <taxon>Spirurina</taxon>
        <taxon>Ascaridomorpha</taxon>
        <taxon>Ascaridoidea</taxon>
        <taxon>Ascarididae</taxon>
        <taxon>Ascaris</taxon>
    </lineage>
</organism>
<protein>
    <recommendedName>
        <fullName>Ovarian abundant message protein</fullName>
        <shortName>Protein OAM</shortName>
    </recommendedName>
</protein>
<name>OAM_ASCSU</name>
<accession>Q01456</accession>
<gene>
    <name type="primary">OAM</name>
</gene>
<comment type="tissue specificity">
    <text>Somatic ovarian tissue.</text>
</comment>
<sequence>MQGTDNAPPGAQANKSSSPRRIRHVRRHYTSNDHRHTPSTAESNPVQRIRSGEECTVELSMSPGQPLVEEQPLVEERPPVEEQPLVEEQPLVEEQPLVEEQPLVEEQPLVEGQPLVEEQPLVEGQPPVEGQPLVEEQPLVEGQPLVEGQPLVEGQPLVEGQPLVGGQPLVGGQPLVEGQPLVEGQPPVKVQPLVEGQPLGNMVSLYDQLPRGSILSLQKGLTLAGVTTPVDMPPLAGVILLCAVLPLASVIPPASATPFAAVIPPAAVIPLPGFLPLGRLLHLADLLLRAGVLLLAGILPLAGAPPLAGVPPLAVALPLAGAPPLAGVPPLAGAPPLAGALPRAGVLRRAGVLRRAGVLRRAGVLRRAGVLRRAGVLRRAGVLRRAGVLRRAGVLRRAGVLRRADVLRRADVVLLAGVQQLADVQRLADVQRLADVQRLADVQRLADVQRLVCVTPLSVVSPLAAVIPAVAVIPVVAVIRVAAVIMLEKMQPQGSSPQLQMGCRRIRQRRSSPRTCQKLRQERDRAGISWREHVGRHMLCSSTRSRYCSHRLGAACRSHCRLRCGVLCLPHALTQPTRQERGVAEMMSTS</sequence>
<keyword id="KW-0677">Repeat</keyword>